<name>RL24_POLAQ</name>
<feature type="chain" id="PRO_1000086487" description="Large ribosomal subunit protein uL24">
    <location>
        <begin position="1"/>
        <end position="102"/>
    </location>
</feature>
<evidence type="ECO:0000255" key="1">
    <source>
        <dbReference type="HAMAP-Rule" id="MF_01326"/>
    </source>
</evidence>
<evidence type="ECO:0000305" key="2"/>
<sequence>MKKIRKGDSVVLLTGRDKGKQGTVTAVLENKLVIEGVNIYKKSVKPNPAAGVTGGMIDKTMPVHISNVAVVDGNGKPSRVGIKLVDGKKQRFLKTTGATLSA</sequence>
<organism>
    <name type="scientific">Polynucleobacter asymbioticus (strain DSM 18221 / CIP 109841 / QLW-P1DMWA-1)</name>
    <name type="common">Polynucleobacter necessarius subsp. asymbioticus</name>
    <dbReference type="NCBI Taxonomy" id="312153"/>
    <lineage>
        <taxon>Bacteria</taxon>
        <taxon>Pseudomonadati</taxon>
        <taxon>Pseudomonadota</taxon>
        <taxon>Betaproteobacteria</taxon>
        <taxon>Burkholderiales</taxon>
        <taxon>Burkholderiaceae</taxon>
        <taxon>Polynucleobacter</taxon>
    </lineage>
</organism>
<proteinExistence type="inferred from homology"/>
<gene>
    <name evidence="1" type="primary">rplX</name>
    <name type="ordered locus">Pnuc_0064</name>
</gene>
<keyword id="KW-1185">Reference proteome</keyword>
<keyword id="KW-0687">Ribonucleoprotein</keyword>
<keyword id="KW-0689">Ribosomal protein</keyword>
<keyword id="KW-0694">RNA-binding</keyword>
<keyword id="KW-0699">rRNA-binding</keyword>
<dbReference type="EMBL" id="CP000655">
    <property type="protein sequence ID" value="ABP33286.1"/>
    <property type="molecule type" value="Genomic_DNA"/>
</dbReference>
<dbReference type="RefSeq" id="WP_011901911.1">
    <property type="nucleotide sequence ID" value="NC_009379.1"/>
</dbReference>
<dbReference type="SMR" id="A4SUX2"/>
<dbReference type="GeneID" id="31480410"/>
<dbReference type="KEGG" id="pnu:Pnuc_0064"/>
<dbReference type="eggNOG" id="COG0198">
    <property type="taxonomic scope" value="Bacteria"/>
</dbReference>
<dbReference type="HOGENOM" id="CLU_093315_2_2_4"/>
<dbReference type="Proteomes" id="UP000000231">
    <property type="component" value="Chromosome"/>
</dbReference>
<dbReference type="GO" id="GO:1990904">
    <property type="term" value="C:ribonucleoprotein complex"/>
    <property type="evidence" value="ECO:0007669"/>
    <property type="project" value="UniProtKB-KW"/>
</dbReference>
<dbReference type="GO" id="GO:0005840">
    <property type="term" value="C:ribosome"/>
    <property type="evidence" value="ECO:0007669"/>
    <property type="project" value="UniProtKB-KW"/>
</dbReference>
<dbReference type="GO" id="GO:0019843">
    <property type="term" value="F:rRNA binding"/>
    <property type="evidence" value="ECO:0007669"/>
    <property type="project" value="UniProtKB-UniRule"/>
</dbReference>
<dbReference type="GO" id="GO:0003735">
    <property type="term" value="F:structural constituent of ribosome"/>
    <property type="evidence" value="ECO:0007669"/>
    <property type="project" value="InterPro"/>
</dbReference>
<dbReference type="GO" id="GO:0006412">
    <property type="term" value="P:translation"/>
    <property type="evidence" value="ECO:0007669"/>
    <property type="project" value="UniProtKB-UniRule"/>
</dbReference>
<dbReference type="CDD" id="cd06089">
    <property type="entry name" value="KOW_RPL26"/>
    <property type="match status" value="1"/>
</dbReference>
<dbReference type="Gene3D" id="2.30.30.30">
    <property type="match status" value="1"/>
</dbReference>
<dbReference type="HAMAP" id="MF_01326_B">
    <property type="entry name" value="Ribosomal_uL24_B"/>
    <property type="match status" value="1"/>
</dbReference>
<dbReference type="InterPro" id="IPR005824">
    <property type="entry name" value="KOW"/>
</dbReference>
<dbReference type="InterPro" id="IPR014722">
    <property type="entry name" value="Rib_uL2_dom2"/>
</dbReference>
<dbReference type="InterPro" id="IPR003256">
    <property type="entry name" value="Ribosomal_uL24"/>
</dbReference>
<dbReference type="InterPro" id="IPR041988">
    <property type="entry name" value="Ribosomal_uL24_KOW"/>
</dbReference>
<dbReference type="InterPro" id="IPR008991">
    <property type="entry name" value="Translation_prot_SH3-like_sf"/>
</dbReference>
<dbReference type="NCBIfam" id="TIGR01079">
    <property type="entry name" value="rplX_bact"/>
    <property type="match status" value="1"/>
</dbReference>
<dbReference type="PANTHER" id="PTHR12903">
    <property type="entry name" value="MITOCHONDRIAL RIBOSOMAL PROTEIN L24"/>
    <property type="match status" value="1"/>
</dbReference>
<dbReference type="Pfam" id="PF00467">
    <property type="entry name" value="KOW"/>
    <property type="match status" value="1"/>
</dbReference>
<dbReference type="Pfam" id="PF17136">
    <property type="entry name" value="ribosomal_L24"/>
    <property type="match status" value="1"/>
</dbReference>
<dbReference type="SMART" id="SM00739">
    <property type="entry name" value="KOW"/>
    <property type="match status" value="1"/>
</dbReference>
<dbReference type="SUPFAM" id="SSF50104">
    <property type="entry name" value="Translation proteins SH3-like domain"/>
    <property type="match status" value="1"/>
</dbReference>
<reference key="1">
    <citation type="journal article" date="2012" name="Stand. Genomic Sci.">
        <title>Complete genome sequence of Polynucleobacter necessarius subsp. asymbioticus type strain (QLW-P1DMWA-1(T)).</title>
        <authorList>
            <person name="Meincke L."/>
            <person name="Copeland A."/>
            <person name="Lapidus A."/>
            <person name="Lucas S."/>
            <person name="Berry K.W."/>
            <person name="Del Rio T.G."/>
            <person name="Hammon N."/>
            <person name="Dalin E."/>
            <person name="Tice H."/>
            <person name="Pitluck S."/>
            <person name="Richardson P."/>
            <person name="Bruce D."/>
            <person name="Goodwin L."/>
            <person name="Han C."/>
            <person name="Tapia R."/>
            <person name="Detter J.C."/>
            <person name="Schmutz J."/>
            <person name="Brettin T."/>
            <person name="Larimer F."/>
            <person name="Land M."/>
            <person name="Hauser L."/>
            <person name="Kyrpides N.C."/>
            <person name="Ivanova N."/>
            <person name="Goker M."/>
            <person name="Woyke T."/>
            <person name="Wu Q.L."/>
            <person name="Pockl M."/>
            <person name="Hahn M.W."/>
            <person name="Klenk H.P."/>
        </authorList>
    </citation>
    <scope>NUCLEOTIDE SEQUENCE [LARGE SCALE GENOMIC DNA]</scope>
    <source>
        <strain>DSM 18221 / CIP 109841 / QLW-P1DMWA-1</strain>
    </source>
</reference>
<comment type="function">
    <text evidence="1">One of two assembly initiator proteins, it binds directly to the 5'-end of the 23S rRNA, where it nucleates assembly of the 50S subunit.</text>
</comment>
<comment type="function">
    <text evidence="1">One of the proteins that surrounds the polypeptide exit tunnel on the outside of the subunit.</text>
</comment>
<comment type="subunit">
    <text evidence="1">Part of the 50S ribosomal subunit.</text>
</comment>
<comment type="similarity">
    <text evidence="1">Belongs to the universal ribosomal protein uL24 family.</text>
</comment>
<accession>A4SUX2</accession>
<protein>
    <recommendedName>
        <fullName evidence="1">Large ribosomal subunit protein uL24</fullName>
    </recommendedName>
    <alternativeName>
        <fullName evidence="2">50S ribosomal protein L24</fullName>
    </alternativeName>
</protein>